<reference key="1">
    <citation type="submission" date="2006-10" db="EMBL/GenBank/DDBJ databases">
        <title>Complete sequence of Syntrophobacter fumaroxidans MPOB.</title>
        <authorList>
            <consortium name="US DOE Joint Genome Institute"/>
            <person name="Copeland A."/>
            <person name="Lucas S."/>
            <person name="Lapidus A."/>
            <person name="Barry K."/>
            <person name="Detter J.C."/>
            <person name="Glavina del Rio T."/>
            <person name="Hammon N."/>
            <person name="Israni S."/>
            <person name="Pitluck S."/>
            <person name="Goltsman E.G."/>
            <person name="Martinez M."/>
            <person name="Schmutz J."/>
            <person name="Larimer F."/>
            <person name="Land M."/>
            <person name="Hauser L."/>
            <person name="Kyrpides N."/>
            <person name="Kim E."/>
            <person name="Boone D.R."/>
            <person name="Brockman F."/>
            <person name="Culley D."/>
            <person name="Ferry J."/>
            <person name="Gunsalus R."/>
            <person name="McInerney M.J."/>
            <person name="Morrison M."/>
            <person name="Plugge C."/>
            <person name="Rohlin L."/>
            <person name="Scholten J."/>
            <person name="Sieber J."/>
            <person name="Stams A.J.M."/>
            <person name="Worm P."/>
            <person name="Henstra A.M."/>
            <person name="Richardson P."/>
        </authorList>
    </citation>
    <scope>NUCLEOTIDE SEQUENCE [LARGE SCALE GENOMIC DNA]</scope>
    <source>
        <strain>DSM 10017 / MPOB</strain>
    </source>
</reference>
<sequence>MTRDRSNLLYEDAGRFIPGGVNSPVRSGRAVGTNPIFIREAKGCYLWDEDGNRYVDFVASWGPLIVGHAHPAVVEAVRAAVEKGTSYGIPTEIEVRMARKVVEMVPSIEMVRMVNSGTEATMSAIRLARGYTGRPGIIKFNGCYHGHGDCLLVKAGSGLATFGIPGSPGVPEEVVRHTIPLSYNDLDEVESVMERDGDRIAAIILEPVAANMGLVLPRPGFLEGLRKLCDKHGALLIFDEVITGFRLARGGAQEFFGVTPDLTCLGKIIGGGLPVGAYGGRRDIMMKMAPVGNVYQAGTLSGNPLAMAAGLATLDLLCEDGVYESLEEKTNHLVDGLNEAAGAAGVPVFTSRIASLGCGFFTSEPVFDFASALASNTDAYAVFFREMLNRGVYFAPAQFEAFFLSMAHESKDLDFTIEAAGNAFVRVKELCAF</sequence>
<proteinExistence type="inferred from homology"/>
<organism>
    <name type="scientific">Syntrophobacter fumaroxidans (strain DSM 10017 / MPOB)</name>
    <dbReference type="NCBI Taxonomy" id="335543"/>
    <lineage>
        <taxon>Bacteria</taxon>
        <taxon>Pseudomonadati</taxon>
        <taxon>Thermodesulfobacteriota</taxon>
        <taxon>Syntrophobacteria</taxon>
        <taxon>Syntrophobacterales</taxon>
        <taxon>Syntrophobacteraceae</taxon>
        <taxon>Syntrophobacter</taxon>
    </lineage>
</organism>
<gene>
    <name evidence="1" type="primary">hemL</name>
    <name type="ordered locus">Sfum_1608</name>
</gene>
<accession>A0LIP3</accession>
<comment type="catalytic activity">
    <reaction evidence="1">
        <text>(S)-4-amino-5-oxopentanoate = 5-aminolevulinate</text>
        <dbReference type="Rhea" id="RHEA:14265"/>
        <dbReference type="ChEBI" id="CHEBI:57501"/>
        <dbReference type="ChEBI" id="CHEBI:356416"/>
        <dbReference type="EC" id="5.4.3.8"/>
    </reaction>
</comment>
<comment type="cofactor">
    <cofactor evidence="1">
        <name>pyridoxal 5'-phosphate</name>
        <dbReference type="ChEBI" id="CHEBI:597326"/>
    </cofactor>
</comment>
<comment type="pathway">
    <text evidence="1">Porphyrin-containing compound metabolism; protoporphyrin-IX biosynthesis; 5-aminolevulinate from L-glutamyl-tRNA(Glu): step 2/2.</text>
</comment>
<comment type="subunit">
    <text evidence="1">Homodimer.</text>
</comment>
<comment type="subcellular location">
    <subcellularLocation>
        <location evidence="1">Cytoplasm</location>
    </subcellularLocation>
</comment>
<comment type="similarity">
    <text evidence="1">Belongs to the class-III pyridoxal-phosphate-dependent aminotransferase family. HemL subfamily.</text>
</comment>
<protein>
    <recommendedName>
        <fullName evidence="1">Glutamate-1-semialdehyde 2,1-aminomutase</fullName>
        <shortName evidence="1">GSA</shortName>
        <ecNumber evidence="1">5.4.3.8</ecNumber>
    </recommendedName>
    <alternativeName>
        <fullName evidence="1">Glutamate-1-semialdehyde aminotransferase</fullName>
        <shortName evidence="1">GSA-AT</shortName>
    </alternativeName>
</protein>
<keyword id="KW-0963">Cytoplasm</keyword>
<keyword id="KW-0413">Isomerase</keyword>
<keyword id="KW-0627">Porphyrin biosynthesis</keyword>
<keyword id="KW-0663">Pyridoxal phosphate</keyword>
<keyword id="KW-1185">Reference proteome</keyword>
<name>GSA_SYNFM</name>
<dbReference type="EC" id="5.4.3.8" evidence="1"/>
<dbReference type="EMBL" id="CP000478">
    <property type="protein sequence ID" value="ABK17295.1"/>
    <property type="molecule type" value="Genomic_DNA"/>
</dbReference>
<dbReference type="RefSeq" id="WP_011698465.1">
    <property type="nucleotide sequence ID" value="NC_008554.1"/>
</dbReference>
<dbReference type="SMR" id="A0LIP3"/>
<dbReference type="FunCoup" id="A0LIP3">
    <property type="interactions" value="564"/>
</dbReference>
<dbReference type="STRING" id="335543.Sfum_1608"/>
<dbReference type="KEGG" id="sfu:Sfum_1608"/>
<dbReference type="eggNOG" id="COG0001">
    <property type="taxonomic scope" value="Bacteria"/>
</dbReference>
<dbReference type="HOGENOM" id="CLU_016922_1_5_7"/>
<dbReference type="InParanoid" id="A0LIP3"/>
<dbReference type="OrthoDB" id="9801052at2"/>
<dbReference type="UniPathway" id="UPA00251">
    <property type="reaction ID" value="UER00317"/>
</dbReference>
<dbReference type="Proteomes" id="UP000001784">
    <property type="component" value="Chromosome"/>
</dbReference>
<dbReference type="GO" id="GO:0005737">
    <property type="term" value="C:cytoplasm"/>
    <property type="evidence" value="ECO:0007669"/>
    <property type="project" value="UniProtKB-SubCell"/>
</dbReference>
<dbReference type="GO" id="GO:0042286">
    <property type="term" value="F:glutamate-1-semialdehyde 2,1-aminomutase activity"/>
    <property type="evidence" value="ECO:0007669"/>
    <property type="project" value="UniProtKB-UniRule"/>
</dbReference>
<dbReference type="GO" id="GO:0030170">
    <property type="term" value="F:pyridoxal phosphate binding"/>
    <property type="evidence" value="ECO:0007669"/>
    <property type="project" value="InterPro"/>
</dbReference>
<dbReference type="GO" id="GO:0008483">
    <property type="term" value="F:transaminase activity"/>
    <property type="evidence" value="ECO:0007669"/>
    <property type="project" value="InterPro"/>
</dbReference>
<dbReference type="GO" id="GO:0006782">
    <property type="term" value="P:protoporphyrinogen IX biosynthetic process"/>
    <property type="evidence" value="ECO:0007669"/>
    <property type="project" value="UniProtKB-UniRule"/>
</dbReference>
<dbReference type="CDD" id="cd00610">
    <property type="entry name" value="OAT_like"/>
    <property type="match status" value="1"/>
</dbReference>
<dbReference type="FunFam" id="3.40.640.10:FF:000021">
    <property type="entry name" value="Glutamate-1-semialdehyde 2,1-aminomutase"/>
    <property type="match status" value="1"/>
</dbReference>
<dbReference type="Gene3D" id="3.90.1150.10">
    <property type="entry name" value="Aspartate Aminotransferase, domain 1"/>
    <property type="match status" value="1"/>
</dbReference>
<dbReference type="Gene3D" id="3.40.640.10">
    <property type="entry name" value="Type I PLP-dependent aspartate aminotransferase-like (Major domain)"/>
    <property type="match status" value="1"/>
</dbReference>
<dbReference type="HAMAP" id="MF_00375">
    <property type="entry name" value="HemL_aminotrans_3"/>
    <property type="match status" value="1"/>
</dbReference>
<dbReference type="InterPro" id="IPR004639">
    <property type="entry name" value="4pyrrol_synth_GluAld_NH2Trfase"/>
</dbReference>
<dbReference type="InterPro" id="IPR005814">
    <property type="entry name" value="Aminotrans_3"/>
</dbReference>
<dbReference type="InterPro" id="IPR049704">
    <property type="entry name" value="Aminotrans_3_PPA_site"/>
</dbReference>
<dbReference type="InterPro" id="IPR015424">
    <property type="entry name" value="PyrdxlP-dep_Trfase"/>
</dbReference>
<dbReference type="InterPro" id="IPR015421">
    <property type="entry name" value="PyrdxlP-dep_Trfase_major"/>
</dbReference>
<dbReference type="InterPro" id="IPR015422">
    <property type="entry name" value="PyrdxlP-dep_Trfase_small"/>
</dbReference>
<dbReference type="NCBIfam" id="TIGR00713">
    <property type="entry name" value="hemL"/>
    <property type="match status" value="1"/>
</dbReference>
<dbReference type="NCBIfam" id="NF000818">
    <property type="entry name" value="PRK00062.1"/>
    <property type="match status" value="1"/>
</dbReference>
<dbReference type="PANTHER" id="PTHR43713">
    <property type="entry name" value="GLUTAMATE-1-SEMIALDEHYDE 2,1-AMINOMUTASE"/>
    <property type="match status" value="1"/>
</dbReference>
<dbReference type="PANTHER" id="PTHR43713:SF3">
    <property type="entry name" value="GLUTAMATE-1-SEMIALDEHYDE 2,1-AMINOMUTASE 1, CHLOROPLASTIC-RELATED"/>
    <property type="match status" value="1"/>
</dbReference>
<dbReference type="Pfam" id="PF00202">
    <property type="entry name" value="Aminotran_3"/>
    <property type="match status" value="1"/>
</dbReference>
<dbReference type="SUPFAM" id="SSF53383">
    <property type="entry name" value="PLP-dependent transferases"/>
    <property type="match status" value="1"/>
</dbReference>
<dbReference type="PROSITE" id="PS00600">
    <property type="entry name" value="AA_TRANSFER_CLASS_3"/>
    <property type="match status" value="1"/>
</dbReference>
<evidence type="ECO:0000255" key="1">
    <source>
        <dbReference type="HAMAP-Rule" id="MF_00375"/>
    </source>
</evidence>
<feature type="chain" id="PRO_0000300954" description="Glutamate-1-semialdehyde 2,1-aminomutase">
    <location>
        <begin position="1"/>
        <end position="433"/>
    </location>
</feature>
<feature type="modified residue" description="N6-(pyridoxal phosphate)lysine" evidence="1">
    <location>
        <position position="267"/>
    </location>
</feature>